<organism>
    <name type="scientific">Synechococcus sp. (strain CC9605)</name>
    <dbReference type="NCBI Taxonomy" id="110662"/>
    <lineage>
        <taxon>Bacteria</taxon>
        <taxon>Bacillati</taxon>
        <taxon>Cyanobacteriota</taxon>
        <taxon>Cyanophyceae</taxon>
        <taxon>Synechococcales</taxon>
        <taxon>Synechococcaceae</taxon>
        <taxon>Synechococcus</taxon>
    </lineage>
</organism>
<protein>
    <recommendedName>
        <fullName evidence="1">Polyribonucleotide nucleotidyltransferase</fullName>
        <ecNumber evidence="1">2.7.7.8</ecNumber>
    </recommendedName>
    <alternativeName>
        <fullName evidence="1">Polynucleotide phosphorylase</fullName>
        <shortName evidence="1">PNPase</shortName>
    </alternativeName>
</protein>
<comment type="function">
    <text evidence="1">Involved in mRNA degradation. Catalyzes the phosphorolysis of single-stranded polyribonucleotides processively in the 3'- to 5'-direction.</text>
</comment>
<comment type="catalytic activity">
    <reaction evidence="1">
        <text>RNA(n+1) + phosphate = RNA(n) + a ribonucleoside 5'-diphosphate</text>
        <dbReference type="Rhea" id="RHEA:22096"/>
        <dbReference type="Rhea" id="RHEA-COMP:14527"/>
        <dbReference type="Rhea" id="RHEA-COMP:17342"/>
        <dbReference type="ChEBI" id="CHEBI:43474"/>
        <dbReference type="ChEBI" id="CHEBI:57930"/>
        <dbReference type="ChEBI" id="CHEBI:140395"/>
        <dbReference type="EC" id="2.7.7.8"/>
    </reaction>
</comment>
<comment type="cofactor">
    <cofactor evidence="1">
        <name>Mg(2+)</name>
        <dbReference type="ChEBI" id="CHEBI:18420"/>
    </cofactor>
</comment>
<comment type="subcellular location">
    <subcellularLocation>
        <location evidence="1">Cytoplasm</location>
    </subcellularLocation>
</comment>
<comment type="similarity">
    <text evidence="1">Belongs to the polyribonucleotide nucleotidyltransferase family.</text>
</comment>
<name>PNP_SYNSC</name>
<sequence length="721" mass="77724">MQGQTQSISFDGREIRLTTGRFAPQAGGSVLVECGDTAVLVTATRSGGREGIDFLPLICDYEERLYAAGRIPGSYMRRESRPPERATLTARLIDRPMRPLFPSWLRDDLQVVATCLSLDERVPADVLAVTGASIATLLAGIPFNGPMAAVRVGLLGDDFVLNPSYREIERGDLDLVVAGTPDGVVMVEAGANQLPEQDVIEAIDFGYEAICELIKAQEQLLKDLGITQVKPEKPDEDSTVPAYLEKQCSKAISAVLSKFDQSKDERDTALETVKGEVSETIAGLKEDHAVRQALASSPKLLGNSFKALTKKLMRQQILKDGKRVDGRGLDEVRQISAMAGVLPRRVHGSGLFQRGLTQVLSTATLGTPSDAQEMDDLHPNTEKLYLHHYNFPPYSVGETRPMRSPGRREIGHGALAERAILPVLPEKDTFPYVVRVVSEVLSSNGSTSMGSVCGSTLSLMDAGVPLKAPVSGAAMGLIKEGDEVRILTDIQGIEDFLGDMDFKVAGSEKGITALQMDMKITGLSVKTVAEAVNQARPARLHILEKMLEAIDTPRDNLSPHAPRLLSFRIDPELIGTVIGPGGRTIKGITERTNTKIDIEDGGIVTIASHDGAAAEEAQKIIEGLTRKVNEGEVFSGSITRIIPIGAFVEILPGKEGMIHISQLSEARVEKVEDVVKVGDEVTVRVREIDNRGRINLTLRGVPQAGDAADVEPQPTPVAPLS</sequence>
<proteinExistence type="inferred from homology"/>
<dbReference type="EC" id="2.7.7.8" evidence="1"/>
<dbReference type="EMBL" id="CP000110">
    <property type="protein sequence ID" value="ABB34344.1"/>
    <property type="molecule type" value="Genomic_DNA"/>
</dbReference>
<dbReference type="RefSeq" id="WP_011363575.1">
    <property type="nucleotide sequence ID" value="NC_007516.1"/>
</dbReference>
<dbReference type="SMR" id="Q3AM38"/>
<dbReference type="STRING" id="110662.Syncc9605_0570"/>
<dbReference type="KEGG" id="syd:Syncc9605_0570"/>
<dbReference type="eggNOG" id="COG1185">
    <property type="taxonomic scope" value="Bacteria"/>
</dbReference>
<dbReference type="HOGENOM" id="CLU_004217_2_2_3"/>
<dbReference type="OrthoDB" id="9804305at2"/>
<dbReference type="GO" id="GO:0005829">
    <property type="term" value="C:cytosol"/>
    <property type="evidence" value="ECO:0007669"/>
    <property type="project" value="TreeGrafter"/>
</dbReference>
<dbReference type="GO" id="GO:0000175">
    <property type="term" value="F:3'-5'-RNA exonuclease activity"/>
    <property type="evidence" value="ECO:0007669"/>
    <property type="project" value="TreeGrafter"/>
</dbReference>
<dbReference type="GO" id="GO:0000287">
    <property type="term" value="F:magnesium ion binding"/>
    <property type="evidence" value="ECO:0007669"/>
    <property type="project" value="UniProtKB-UniRule"/>
</dbReference>
<dbReference type="GO" id="GO:0004654">
    <property type="term" value="F:polyribonucleotide nucleotidyltransferase activity"/>
    <property type="evidence" value="ECO:0007669"/>
    <property type="project" value="UniProtKB-UniRule"/>
</dbReference>
<dbReference type="GO" id="GO:0003723">
    <property type="term" value="F:RNA binding"/>
    <property type="evidence" value="ECO:0007669"/>
    <property type="project" value="UniProtKB-UniRule"/>
</dbReference>
<dbReference type="GO" id="GO:0006402">
    <property type="term" value="P:mRNA catabolic process"/>
    <property type="evidence" value="ECO:0007669"/>
    <property type="project" value="UniProtKB-UniRule"/>
</dbReference>
<dbReference type="GO" id="GO:0006396">
    <property type="term" value="P:RNA processing"/>
    <property type="evidence" value="ECO:0007669"/>
    <property type="project" value="InterPro"/>
</dbReference>
<dbReference type="CDD" id="cd02393">
    <property type="entry name" value="KH-I_PNPase"/>
    <property type="match status" value="1"/>
</dbReference>
<dbReference type="CDD" id="cd11363">
    <property type="entry name" value="RNase_PH_PNPase_1"/>
    <property type="match status" value="1"/>
</dbReference>
<dbReference type="CDD" id="cd11364">
    <property type="entry name" value="RNase_PH_PNPase_2"/>
    <property type="match status" value="1"/>
</dbReference>
<dbReference type="FunFam" id="2.40.50.140:FF:000023">
    <property type="entry name" value="Polyribonucleotide nucleotidyltransferase"/>
    <property type="match status" value="1"/>
</dbReference>
<dbReference type="FunFam" id="3.30.1370.10:FF:000001">
    <property type="entry name" value="Polyribonucleotide nucleotidyltransferase"/>
    <property type="match status" value="1"/>
</dbReference>
<dbReference type="FunFam" id="3.30.230.70:FF:000001">
    <property type="entry name" value="Polyribonucleotide nucleotidyltransferase"/>
    <property type="match status" value="1"/>
</dbReference>
<dbReference type="FunFam" id="3.30.230.70:FF:000002">
    <property type="entry name" value="Polyribonucleotide nucleotidyltransferase"/>
    <property type="match status" value="1"/>
</dbReference>
<dbReference type="Gene3D" id="3.30.230.70">
    <property type="entry name" value="GHMP Kinase, N-terminal domain"/>
    <property type="match status" value="2"/>
</dbReference>
<dbReference type="Gene3D" id="3.30.1370.10">
    <property type="entry name" value="K Homology domain, type 1"/>
    <property type="match status" value="1"/>
</dbReference>
<dbReference type="Gene3D" id="2.40.50.140">
    <property type="entry name" value="Nucleic acid-binding proteins"/>
    <property type="match status" value="1"/>
</dbReference>
<dbReference type="HAMAP" id="MF_01595">
    <property type="entry name" value="PNPase"/>
    <property type="match status" value="1"/>
</dbReference>
<dbReference type="InterPro" id="IPR001247">
    <property type="entry name" value="ExoRNase_PH_dom1"/>
</dbReference>
<dbReference type="InterPro" id="IPR015847">
    <property type="entry name" value="ExoRNase_PH_dom2"/>
</dbReference>
<dbReference type="InterPro" id="IPR036345">
    <property type="entry name" value="ExoRNase_PH_dom2_sf"/>
</dbReference>
<dbReference type="InterPro" id="IPR004087">
    <property type="entry name" value="KH_dom"/>
</dbReference>
<dbReference type="InterPro" id="IPR004088">
    <property type="entry name" value="KH_dom_type_1"/>
</dbReference>
<dbReference type="InterPro" id="IPR036612">
    <property type="entry name" value="KH_dom_type_1_sf"/>
</dbReference>
<dbReference type="InterPro" id="IPR012340">
    <property type="entry name" value="NA-bd_OB-fold"/>
</dbReference>
<dbReference type="InterPro" id="IPR012162">
    <property type="entry name" value="PNPase"/>
</dbReference>
<dbReference type="InterPro" id="IPR027408">
    <property type="entry name" value="PNPase/RNase_PH_dom_sf"/>
</dbReference>
<dbReference type="InterPro" id="IPR015848">
    <property type="entry name" value="PNPase_PH_RNA-bd_bac/org-type"/>
</dbReference>
<dbReference type="InterPro" id="IPR020568">
    <property type="entry name" value="Ribosomal_Su5_D2-typ_SF"/>
</dbReference>
<dbReference type="InterPro" id="IPR003029">
    <property type="entry name" value="S1_domain"/>
</dbReference>
<dbReference type="NCBIfam" id="TIGR03591">
    <property type="entry name" value="polynuc_phos"/>
    <property type="match status" value="1"/>
</dbReference>
<dbReference type="NCBIfam" id="NF008805">
    <property type="entry name" value="PRK11824.1"/>
    <property type="match status" value="1"/>
</dbReference>
<dbReference type="PANTHER" id="PTHR11252">
    <property type="entry name" value="POLYRIBONUCLEOTIDE NUCLEOTIDYLTRANSFERASE"/>
    <property type="match status" value="1"/>
</dbReference>
<dbReference type="PANTHER" id="PTHR11252:SF0">
    <property type="entry name" value="POLYRIBONUCLEOTIDE NUCLEOTIDYLTRANSFERASE 1, MITOCHONDRIAL"/>
    <property type="match status" value="1"/>
</dbReference>
<dbReference type="Pfam" id="PF00013">
    <property type="entry name" value="KH_1"/>
    <property type="match status" value="1"/>
</dbReference>
<dbReference type="Pfam" id="PF03726">
    <property type="entry name" value="PNPase"/>
    <property type="match status" value="1"/>
</dbReference>
<dbReference type="Pfam" id="PF01138">
    <property type="entry name" value="RNase_PH"/>
    <property type="match status" value="2"/>
</dbReference>
<dbReference type="Pfam" id="PF03725">
    <property type="entry name" value="RNase_PH_C"/>
    <property type="match status" value="2"/>
</dbReference>
<dbReference type="Pfam" id="PF00575">
    <property type="entry name" value="S1"/>
    <property type="match status" value="1"/>
</dbReference>
<dbReference type="PIRSF" id="PIRSF005499">
    <property type="entry name" value="PNPase"/>
    <property type="match status" value="1"/>
</dbReference>
<dbReference type="SMART" id="SM00322">
    <property type="entry name" value="KH"/>
    <property type="match status" value="1"/>
</dbReference>
<dbReference type="SMART" id="SM00316">
    <property type="entry name" value="S1"/>
    <property type="match status" value="1"/>
</dbReference>
<dbReference type="SUPFAM" id="SSF54791">
    <property type="entry name" value="Eukaryotic type KH-domain (KH-domain type I)"/>
    <property type="match status" value="1"/>
</dbReference>
<dbReference type="SUPFAM" id="SSF50249">
    <property type="entry name" value="Nucleic acid-binding proteins"/>
    <property type="match status" value="1"/>
</dbReference>
<dbReference type="SUPFAM" id="SSF55666">
    <property type="entry name" value="Ribonuclease PH domain 2-like"/>
    <property type="match status" value="2"/>
</dbReference>
<dbReference type="SUPFAM" id="SSF54211">
    <property type="entry name" value="Ribosomal protein S5 domain 2-like"/>
    <property type="match status" value="2"/>
</dbReference>
<dbReference type="PROSITE" id="PS50084">
    <property type="entry name" value="KH_TYPE_1"/>
    <property type="match status" value="1"/>
</dbReference>
<dbReference type="PROSITE" id="PS50126">
    <property type="entry name" value="S1"/>
    <property type="match status" value="1"/>
</dbReference>
<keyword id="KW-0963">Cytoplasm</keyword>
<keyword id="KW-0460">Magnesium</keyword>
<keyword id="KW-0479">Metal-binding</keyword>
<keyword id="KW-0548">Nucleotidyltransferase</keyword>
<keyword id="KW-0694">RNA-binding</keyword>
<keyword id="KW-0808">Transferase</keyword>
<gene>
    <name evidence="1" type="primary">pnp</name>
    <name type="ordered locus">Syncc9605_0570</name>
</gene>
<evidence type="ECO:0000255" key="1">
    <source>
        <dbReference type="HAMAP-Rule" id="MF_01595"/>
    </source>
</evidence>
<feature type="chain" id="PRO_0000329897" description="Polyribonucleotide nucleotidyltransferase">
    <location>
        <begin position="1"/>
        <end position="721"/>
    </location>
</feature>
<feature type="domain" description="KH" evidence="1">
    <location>
        <begin position="562"/>
        <end position="621"/>
    </location>
</feature>
<feature type="domain" description="S1 motif" evidence="1">
    <location>
        <begin position="631"/>
        <end position="699"/>
    </location>
</feature>
<feature type="binding site" evidence="1">
    <location>
        <position position="495"/>
    </location>
    <ligand>
        <name>Mg(2+)</name>
        <dbReference type="ChEBI" id="CHEBI:18420"/>
    </ligand>
</feature>
<feature type="binding site" evidence="1">
    <location>
        <position position="501"/>
    </location>
    <ligand>
        <name>Mg(2+)</name>
        <dbReference type="ChEBI" id="CHEBI:18420"/>
    </ligand>
</feature>
<accession>Q3AM38</accession>
<reference key="1">
    <citation type="submission" date="2005-07" db="EMBL/GenBank/DDBJ databases">
        <title>Complete sequence of Synechococcus sp. CC9605.</title>
        <authorList>
            <consortium name="US DOE Joint Genome Institute"/>
            <person name="Copeland A."/>
            <person name="Lucas S."/>
            <person name="Lapidus A."/>
            <person name="Barry K."/>
            <person name="Detter J.C."/>
            <person name="Glavina T."/>
            <person name="Hammon N."/>
            <person name="Israni S."/>
            <person name="Pitluck S."/>
            <person name="Schmutz J."/>
            <person name="Martinez M."/>
            <person name="Larimer F."/>
            <person name="Land M."/>
            <person name="Kyrpides N."/>
            <person name="Ivanova N."/>
            <person name="Richardson P."/>
        </authorList>
    </citation>
    <scope>NUCLEOTIDE SEQUENCE [LARGE SCALE GENOMIC DNA]</scope>
    <source>
        <strain>CC9605</strain>
    </source>
</reference>